<organism>
    <name type="scientific">Rattus norvegicus</name>
    <name type="common">Rat</name>
    <dbReference type="NCBI Taxonomy" id="10116"/>
    <lineage>
        <taxon>Eukaryota</taxon>
        <taxon>Metazoa</taxon>
        <taxon>Chordata</taxon>
        <taxon>Craniata</taxon>
        <taxon>Vertebrata</taxon>
        <taxon>Euteleostomi</taxon>
        <taxon>Mammalia</taxon>
        <taxon>Eutheria</taxon>
        <taxon>Euarchontoglires</taxon>
        <taxon>Glires</taxon>
        <taxon>Rodentia</taxon>
        <taxon>Myomorpha</taxon>
        <taxon>Muroidea</taxon>
        <taxon>Muridae</taxon>
        <taxon>Murinae</taxon>
        <taxon>Rattus</taxon>
    </lineage>
</organism>
<gene>
    <name type="primary">Bod1</name>
    <name type="synonym">Fam44b</name>
</gene>
<feature type="chain" id="PRO_0000187030" description="Biorientation of chromosomes in cell division protein 1">
    <location>
        <begin position="1"/>
        <end position="173"/>
    </location>
</feature>
<feature type="region of interest" description="Disordered" evidence="3">
    <location>
        <begin position="1"/>
        <end position="32"/>
    </location>
</feature>
<feature type="region of interest" description="Disordered" evidence="3">
    <location>
        <begin position="148"/>
        <end position="173"/>
    </location>
</feature>
<feature type="compositionally biased region" description="Low complexity" evidence="3">
    <location>
        <begin position="1"/>
        <end position="15"/>
    </location>
</feature>
<feature type="compositionally biased region" description="Gly residues" evidence="3">
    <location>
        <begin position="16"/>
        <end position="25"/>
    </location>
</feature>
<feature type="compositionally biased region" description="Pro residues" evidence="3">
    <location>
        <begin position="154"/>
        <end position="173"/>
    </location>
</feature>
<dbReference type="EMBL" id="BC079025">
    <property type="protein sequence ID" value="AAH79025.1"/>
    <property type="molecule type" value="mRNA"/>
</dbReference>
<dbReference type="RefSeq" id="NP_001013876.2">
    <property type="nucleotide sequence ID" value="NM_001013854.1"/>
</dbReference>
<dbReference type="FunCoup" id="Q6AYJ2">
    <property type="interactions" value="717"/>
</dbReference>
<dbReference type="STRING" id="10116.ENSRNOP00000028115"/>
<dbReference type="iPTMnet" id="Q6AYJ2"/>
<dbReference type="PhosphoSitePlus" id="Q6AYJ2"/>
<dbReference type="PaxDb" id="10116-ENSRNOP00000028115"/>
<dbReference type="GeneID" id="287173"/>
<dbReference type="KEGG" id="rno:287173"/>
<dbReference type="UCSC" id="RGD:1305622">
    <property type="organism name" value="rat"/>
</dbReference>
<dbReference type="AGR" id="RGD:1305622"/>
<dbReference type="CTD" id="91272"/>
<dbReference type="RGD" id="1305622">
    <property type="gene designation" value="Bod1"/>
</dbReference>
<dbReference type="eggNOG" id="ENOG502S57W">
    <property type="taxonomic scope" value="Eukaryota"/>
</dbReference>
<dbReference type="HOGENOM" id="CLU_1170364_0_0_1"/>
<dbReference type="InParanoid" id="Q6AYJ2"/>
<dbReference type="OrthoDB" id="7605699at2759"/>
<dbReference type="PhylomeDB" id="Q6AYJ2"/>
<dbReference type="TreeFam" id="TF325311"/>
<dbReference type="PRO" id="PR:Q6AYJ2"/>
<dbReference type="Proteomes" id="UP000002494">
    <property type="component" value="Unplaced"/>
</dbReference>
<dbReference type="GO" id="GO:0005813">
    <property type="term" value="C:centrosome"/>
    <property type="evidence" value="ECO:0000266"/>
    <property type="project" value="RGD"/>
</dbReference>
<dbReference type="GO" id="GO:0005737">
    <property type="term" value="C:cytoplasm"/>
    <property type="evidence" value="ECO:0007669"/>
    <property type="project" value="UniProtKB-KW"/>
</dbReference>
<dbReference type="GO" id="GO:0000940">
    <property type="term" value="C:outer kinetochore"/>
    <property type="evidence" value="ECO:0000266"/>
    <property type="project" value="RGD"/>
</dbReference>
<dbReference type="GO" id="GO:0048188">
    <property type="term" value="C:Set1C/COMPASS complex"/>
    <property type="evidence" value="ECO:0000266"/>
    <property type="project" value="RGD"/>
</dbReference>
<dbReference type="GO" id="GO:0005876">
    <property type="term" value="C:spindle microtubule"/>
    <property type="evidence" value="ECO:0000266"/>
    <property type="project" value="RGD"/>
</dbReference>
<dbReference type="GO" id="GO:0000922">
    <property type="term" value="C:spindle pole"/>
    <property type="evidence" value="ECO:0000266"/>
    <property type="project" value="RGD"/>
</dbReference>
<dbReference type="GO" id="GO:0051721">
    <property type="term" value="F:protein phosphatase 2A binding"/>
    <property type="evidence" value="ECO:0000266"/>
    <property type="project" value="RGD"/>
</dbReference>
<dbReference type="GO" id="GO:0004864">
    <property type="term" value="F:protein phosphatase inhibitor activity"/>
    <property type="evidence" value="ECO:0000266"/>
    <property type="project" value="RGD"/>
</dbReference>
<dbReference type="GO" id="GO:0051301">
    <property type="term" value="P:cell division"/>
    <property type="evidence" value="ECO:0007669"/>
    <property type="project" value="UniProtKB-KW"/>
</dbReference>
<dbReference type="GO" id="GO:0007080">
    <property type="term" value="P:mitotic metaphase chromosome alignment"/>
    <property type="evidence" value="ECO:0000266"/>
    <property type="project" value="RGD"/>
</dbReference>
<dbReference type="GO" id="GO:1990758">
    <property type="term" value="P:mitotic sister chromatid biorientation"/>
    <property type="evidence" value="ECO:0000266"/>
    <property type="project" value="RGD"/>
</dbReference>
<dbReference type="GO" id="GO:0071962">
    <property type="term" value="P:mitotic sister chromatid cohesion, centromeric"/>
    <property type="evidence" value="ECO:0000266"/>
    <property type="project" value="RGD"/>
</dbReference>
<dbReference type="GO" id="GO:0071459">
    <property type="term" value="P:protein localization to chromosome, centromeric region"/>
    <property type="evidence" value="ECO:0000266"/>
    <property type="project" value="RGD"/>
</dbReference>
<dbReference type="InterPro" id="IPR055264">
    <property type="entry name" value="BOD1/SHG1_dom"/>
</dbReference>
<dbReference type="InterPro" id="IPR043244">
    <property type="entry name" value="BOD1L1"/>
</dbReference>
<dbReference type="PANTHER" id="PTHR47391">
    <property type="entry name" value="BIORIENTATION OF CHROMOSOMES IN CELL DIVISION 1 LIKE 1"/>
    <property type="match status" value="1"/>
</dbReference>
<dbReference type="PANTHER" id="PTHR47391:SF1">
    <property type="entry name" value="BIORIENTATION OF CHROMOSOMES IN CELL DIVISION 1 LIKE 1"/>
    <property type="match status" value="1"/>
</dbReference>
<dbReference type="Pfam" id="PF05205">
    <property type="entry name" value="COMPASS-Shg1"/>
    <property type="match status" value="1"/>
</dbReference>
<sequence length="173" mass="18352">MADSAGAGAAGQASGPAGGSSGAGGTVNPASLPPGDPQLIALIVEQLKSRGLFDSFRRDCLADVDTKPAYQNLRQKVDNFVSTHLDKQEWNPAMNKNQLRNGLRQSVVQSGMLEAGVDRIISQVVDPKLNHIFRPQIERAIHEFLAAQKKEAVPAPPPEPEGQDPPAPSQDAS</sequence>
<evidence type="ECO:0000250" key="1"/>
<evidence type="ECO:0000250" key="2">
    <source>
        <dbReference type="UniProtKB" id="Q96IK1"/>
    </source>
</evidence>
<evidence type="ECO:0000256" key="3">
    <source>
        <dbReference type="SAM" id="MobiDB-lite"/>
    </source>
</evidence>
<evidence type="ECO:0000305" key="4"/>
<accession>Q6AYJ2</accession>
<comment type="function">
    <text evidence="1">Required for proper chromosome biorientation through the detection or correction of syntelic attachments in mitotic spindles.</text>
</comment>
<comment type="subunit">
    <text evidence="2">Component of the SET1B complex composed of the catalytic subunit SETD1B, WDR5, WDR82, RBBP5, ASH2L/ASH2, CXXC1/CFP1, HCFC1, DPY30 homotrimer and BOD1.</text>
</comment>
<comment type="subcellular location">
    <subcellularLocation>
        <location evidence="1">Cytoplasm</location>
        <location evidence="1">Cytoskeleton</location>
        <location evidence="1">Microtubule organizing center</location>
        <location evidence="1">Centrosome</location>
    </subcellularLocation>
    <subcellularLocation>
        <location evidence="1">Chromosome</location>
        <location evidence="1">Centromere</location>
        <location evidence="1">Kinetochore</location>
    </subcellularLocation>
    <text evidence="1">Localizes at the centrosomes throughout the cell cycle, only dissociating during cytokinesis. Localizes at the kinetochore from prometaphase until anaphase.</text>
</comment>
<comment type="similarity">
    <text evidence="4">Belongs to the BOD1 family.</text>
</comment>
<proteinExistence type="evidence at transcript level"/>
<name>BOD1_RAT</name>
<protein>
    <recommendedName>
        <fullName>Biorientation of chromosomes in cell division protein 1</fullName>
    </recommendedName>
    <alternativeName>
        <fullName>Biorientation defective protein 1</fullName>
    </alternativeName>
    <alternativeName>
        <fullName>Protein FAM44B</fullName>
    </alternativeName>
</protein>
<keyword id="KW-0131">Cell cycle</keyword>
<keyword id="KW-0132">Cell division</keyword>
<keyword id="KW-0137">Centromere</keyword>
<keyword id="KW-0158">Chromosome</keyword>
<keyword id="KW-0963">Cytoplasm</keyword>
<keyword id="KW-0206">Cytoskeleton</keyword>
<keyword id="KW-0995">Kinetochore</keyword>
<keyword id="KW-0498">Mitosis</keyword>
<keyword id="KW-1185">Reference proteome</keyword>
<reference key="1">
    <citation type="journal article" date="2004" name="Genome Res.">
        <title>The status, quality, and expansion of the NIH full-length cDNA project: the Mammalian Gene Collection (MGC).</title>
        <authorList>
            <consortium name="The MGC Project Team"/>
        </authorList>
    </citation>
    <scope>NUCLEOTIDE SEQUENCE [LARGE SCALE MRNA]</scope>
    <source>
        <tissue>Testis</tissue>
    </source>
</reference>